<protein>
    <recommendedName>
        <fullName>Protein RKD3</fullName>
        <shortName>AtRKD3</shortName>
    </recommendedName>
    <alternativeName>
        <fullName>RWP-RK domain-containing protein 3</fullName>
    </alternativeName>
</protein>
<proteinExistence type="inferred from homology"/>
<evidence type="ECO:0000250" key="1"/>
<evidence type="ECO:0000255" key="2"/>
<evidence type="ECO:0000255" key="3">
    <source>
        <dbReference type="PROSITE-ProRule" id="PRU00852"/>
    </source>
</evidence>
<keyword id="KW-0175">Coiled coil</keyword>
<keyword id="KW-0238">DNA-binding</keyword>
<keyword id="KW-0539">Nucleus</keyword>
<keyword id="KW-1185">Reference proteome</keyword>
<keyword id="KW-0804">Transcription</keyword>
<keyword id="KW-0805">Transcription regulation</keyword>
<reference key="1">
    <citation type="submission" date="1999-04" db="EMBL/GenBank/DDBJ databases">
        <title>Structural analysis of Arabidopsis thaliana chromosome 5. XI.</title>
        <authorList>
            <person name="Kaneko T."/>
            <person name="Katoh T."/>
            <person name="Asamizu E."/>
            <person name="Sato S."/>
            <person name="Nakamura Y."/>
            <person name="Kotani H."/>
            <person name="Tabata S."/>
        </authorList>
    </citation>
    <scope>NUCLEOTIDE SEQUENCE [LARGE SCALE GENOMIC DNA]</scope>
    <source>
        <strain>cv. Columbia</strain>
    </source>
</reference>
<reference key="2">
    <citation type="journal article" date="2017" name="Plant J.">
        <title>Araport11: a complete reannotation of the Arabidopsis thaliana reference genome.</title>
        <authorList>
            <person name="Cheng C.Y."/>
            <person name="Krishnakumar V."/>
            <person name="Chan A.P."/>
            <person name="Thibaud-Nissen F."/>
            <person name="Schobel S."/>
            <person name="Town C.D."/>
        </authorList>
    </citation>
    <scope>GENOME REANNOTATION</scope>
    <source>
        <strain>cv. Columbia</strain>
    </source>
</reference>
<reference key="3">
    <citation type="journal article" date="2005" name="J. Mol. Evol.">
        <title>Evolution of NIN-like proteins in Arabidopsis, rice, and Lotus japonicus.</title>
        <authorList>
            <person name="Schauser L."/>
            <person name="Wieloch W."/>
            <person name="Stougaard J."/>
        </authorList>
    </citation>
    <scope>GENE FAMILY</scope>
    <scope>NOMENCLATURE</scope>
</reference>
<feature type="chain" id="PRO_0000401497" description="Protein RKD3">
    <location>
        <begin position="1"/>
        <end position="277"/>
    </location>
</feature>
<feature type="domain" description="RWP-RK" evidence="3">
    <location>
        <begin position="142"/>
        <end position="226"/>
    </location>
</feature>
<feature type="coiled-coil region" evidence="2">
    <location>
        <begin position="201"/>
        <end position="246"/>
    </location>
</feature>
<sequence>MADQRPLMTWLEANNYESFLQEDIFSFLDQSLFVDPHSSFIDPFKDFQTQNWFSLQDSIVNHISTTFAADHTFLASLDLEAISSTFSLDISSGWWNENNGNYNNQVEPNLDEISRTNTMGDPNMEQILHEDVNTMKEKTSQKRIIMKRRYREDGVINNMSREMMKQYFYMPITKAAKELNIGVTLLKKRCRELGIPRWPHRKLTSLNALIANLKDLLGNTKGRTPKSKLRNALELLEMEKKMIEEVPDLEFGDKTKRLRQACFKAKYKRRRLFSSSS</sequence>
<gene>
    <name type="primary">RKD3</name>
    <name type="ordered locus">At5g66990</name>
    <name type="ORF">K8A10.6</name>
</gene>
<name>RKD3_ARATH</name>
<accession>Q9FGD1</accession>
<dbReference type="EMBL" id="AB026640">
    <property type="protein sequence ID" value="BAB08938.1"/>
    <property type="molecule type" value="Genomic_DNA"/>
</dbReference>
<dbReference type="EMBL" id="CP002688">
    <property type="protein sequence ID" value="AED98288.1"/>
    <property type="molecule type" value="Genomic_DNA"/>
</dbReference>
<dbReference type="RefSeq" id="NP_201500.1">
    <property type="nucleotide sequence ID" value="NM_126099.1"/>
</dbReference>
<dbReference type="SMR" id="Q9FGD1"/>
<dbReference type="STRING" id="3702.Q9FGD1"/>
<dbReference type="PaxDb" id="3702-AT5G66990.1"/>
<dbReference type="EnsemblPlants" id="AT5G66990.1">
    <property type="protein sequence ID" value="AT5G66990.1"/>
    <property type="gene ID" value="AT5G66990"/>
</dbReference>
<dbReference type="GeneID" id="836834"/>
<dbReference type="Gramene" id="AT5G66990.1">
    <property type="protein sequence ID" value="AT5G66990.1"/>
    <property type="gene ID" value="AT5G66990"/>
</dbReference>
<dbReference type="KEGG" id="ath:AT5G66990"/>
<dbReference type="Araport" id="AT5G66990"/>
<dbReference type="TAIR" id="AT5G66990">
    <property type="gene designation" value="RKD3"/>
</dbReference>
<dbReference type="eggNOG" id="ENOG502QSPQ">
    <property type="taxonomic scope" value="Eukaryota"/>
</dbReference>
<dbReference type="HOGENOM" id="CLU_071153_0_0_1"/>
<dbReference type="InParanoid" id="Q9FGD1"/>
<dbReference type="OMA" id="NENACNF"/>
<dbReference type="OrthoDB" id="6270329at2759"/>
<dbReference type="PhylomeDB" id="Q9FGD1"/>
<dbReference type="PRO" id="PR:Q9FGD1"/>
<dbReference type="Proteomes" id="UP000006548">
    <property type="component" value="Chromosome 5"/>
</dbReference>
<dbReference type="ExpressionAtlas" id="Q9FGD1">
    <property type="expression patterns" value="baseline"/>
</dbReference>
<dbReference type="GO" id="GO:0005634">
    <property type="term" value="C:nucleus"/>
    <property type="evidence" value="ECO:0007669"/>
    <property type="project" value="UniProtKB-SubCell"/>
</dbReference>
<dbReference type="GO" id="GO:0003677">
    <property type="term" value="F:DNA binding"/>
    <property type="evidence" value="ECO:0007669"/>
    <property type="project" value="UniProtKB-KW"/>
</dbReference>
<dbReference type="GO" id="GO:0003700">
    <property type="term" value="F:DNA-binding transcription factor activity"/>
    <property type="evidence" value="ECO:0000250"/>
    <property type="project" value="TAIR"/>
</dbReference>
<dbReference type="InterPro" id="IPR044607">
    <property type="entry name" value="RKD-like"/>
</dbReference>
<dbReference type="InterPro" id="IPR003035">
    <property type="entry name" value="RWP-RK_dom"/>
</dbReference>
<dbReference type="PANTHER" id="PTHR46373:SF32">
    <property type="entry name" value="PROTEIN RKD3"/>
    <property type="match status" value="1"/>
</dbReference>
<dbReference type="PANTHER" id="PTHR46373">
    <property type="entry name" value="PROTEIN RKD4"/>
    <property type="match status" value="1"/>
</dbReference>
<dbReference type="Pfam" id="PF02042">
    <property type="entry name" value="RWP-RK"/>
    <property type="match status" value="1"/>
</dbReference>
<dbReference type="PROSITE" id="PS51519">
    <property type="entry name" value="RWP_RK"/>
    <property type="match status" value="1"/>
</dbReference>
<organism>
    <name type="scientific">Arabidopsis thaliana</name>
    <name type="common">Mouse-ear cress</name>
    <dbReference type="NCBI Taxonomy" id="3702"/>
    <lineage>
        <taxon>Eukaryota</taxon>
        <taxon>Viridiplantae</taxon>
        <taxon>Streptophyta</taxon>
        <taxon>Embryophyta</taxon>
        <taxon>Tracheophyta</taxon>
        <taxon>Spermatophyta</taxon>
        <taxon>Magnoliopsida</taxon>
        <taxon>eudicotyledons</taxon>
        <taxon>Gunneridae</taxon>
        <taxon>Pentapetalae</taxon>
        <taxon>rosids</taxon>
        <taxon>malvids</taxon>
        <taxon>Brassicales</taxon>
        <taxon>Brassicaceae</taxon>
        <taxon>Camelineae</taxon>
        <taxon>Arabidopsis</taxon>
    </lineage>
</organism>
<comment type="function">
    <text evidence="1">Putative transcription factor.</text>
</comment>
<comment type="subcellular location">
    <subcellularLocation>
        <location evidence="3">Nucleus</location>
    </subcellularLocation>
</comment>